<organism>
    <name type="scientific">Synechocystis sp. (strain ATCC 27184 / PCC 6803 / Kazusa)</name>
    <dbReference type="NCBI Taxonomy" id="1111708"/>
    <lineage>
        <taxon>Bacteria</taxon>
        <taxon>Bacillati</taxon>
        <taxon>Cyanobacteriota</taxon>
        <taxon>Cyanophyceae</taxon>
        <taxon>Synechococcales</taxon>
        <taxon>Merismopediaceae</taxon>
        <taxon>Synechocystis</taxon>
    </lineage>
</organism>
<protein>
    <recommendedName>
        <fullName evidence="1">Cytochrome b559 subunit alpha</fullName>
    </recommendedName>
    <alternativeName>
        <fullName evidence="1">PSII reaction center subunit V</fullName>
    </alternativeName>
</protein>
<proteinExistence type="evidence at protein level"/>
<accession>P09190</accession>
<evidence type="ECO:0000255" key="1">
    <source>
        <dbReference type="HAMAP-Rule" id="MF_00642"/>
    </source>
</evidence>
<evidence type="ECO:0000269" key="2">
    <source>
    </source>
</evidence>
<evidence type="ECO:0000269" key="3">
    <source>
    </source>
</evidence>
<evidence type="ECO:0000269" key="4">
    <source>
    </source>
</evidence>
<evidence type="ECO:0000269" key="5">
    <source>
    </source>
</evidence>
<evidence type="ECO:0000305" key="6">
    <source>
    </source>
</evidence>
<evidence type="ECO:0000312" key="7">
    <source>
        <dbReference type="PDB" id="7N8O"/>
    </source>
</evidence>
<evidence type="ECO:0007744" key="8">
    <source>
        <dbReference type="PDB" id="7N8O"/>
    </source>
</evidence>
<evidence type="ECO:0007744" key="9">
    <source>
        <dbReference type="PDB" id="7RCV"/>
    </source>
</evidence>
<evidence type="ECO:0007829" key="10">
    <source>
        <dbReference type="PDB" id="7N8O"/>
    </source>
</evidence>
<name>PSBE_SYNY3</name>
<dbReference type="EMBL" id="M33897">
    <property type="protein sequence ID" value="AAA27299.1"/>
    <property type="molecule type" value="Genomic_DNA"/>
</dbReference>
<dbReference type="EMBL" id="BA000022">
    <property type="protein sequence ID" value="BAA17092.1"/>
    <property type="molecule type" value="Genomic_DNA"/>
</dbReference>
<dbReference type="PIR" id="S00338">
    <property type="entry name" value="CBYB55"/>
</dbReference>
<dbReference type="PDB" id="6WJ6">
    <property type="method" value="EM"/>
    <property type="resolution" value="2.58 A"/>
    <property type="chains" value="E=1-81"/>
</dbReference>
<dbReference type="PDB" id="7N8O">
    <property type="method" value="EM"/>
    <property type="resolution" value="1.93 A"/>
    <property type="chains" value="E/e=3-81"/>
</dbReference>
<dbReference type="PDB" id="7RCV">
    <property type="method" value="EM"/>
    <property type="resolution" value="2.01 A"/>
    <property type="chains" value="E/e=3-81"/>
</dbReference>
<dbReference type="PDB" id="8AM5">
    <property type="method" value="EM"/>
    <property type="resolution" value="3.10 A"/>
    <property type="chains" value="E=1-81"/>
</dbReference>
<dbReference type="PDB" id="8ASL">
    <property type="method" value="EM"/>
    <property type="resolution" value="3.15 A"/>
    <property type="chains" value="E=1-81"/>
</dbReference>
<dbReference type="PDB" id="8TOW">
    <property type="method" value="EM"/>
    <property type="resolution" value="2.14 A"/>
    <property type="chains" value="E/e=1-81"/>
</dbReference>
<dbReference type="PDB" id="9EH5">
    <property type="method" value="EM"/>
    <property type="resolution" value="1.97 A"/>
    <property type="chains" value="E/e=1-81"/>
</dbReference>
<dbReference type="PDBsum" id="6WJ6"/>
<dbReference type="PDBsum" id="7N8O"/>
<dbReference type="PDBsum" id="7RCV"/>
<dbReference type="PDBsum" id="8AM5"/>
<dbReference type="PDBsum" id="8ASL"/>
<dbReference type="PDBsum" id="8TOW"/>
<dbReference type="PDBsum" id="9EH5"/>
<dbReference type="EMDB" id="EMD-15522"/>
<dbReference type="EMDB" id="EMD-15618"/>
<dbReference type="EMDB" id="EMD-21690"/>
<dbReference type="EMDB" id="EMD-24239"/>
<dbReference type="EMDB" id="EMD-24407"/>
<dbReference type="EMDB" id="EMD-41460"/>
<dbReference type="EMDB" id="EMD-48046"/>
<dbReference type="SMR" id="P09190"/>
<dbReference type="IntAct" id="P09190">
    <property type="interactions" value="5"/>
</dbReference>
<dbReference type="STRING" id="1148.gene:10497953"/>
<dbReference type="PaxDb" id="1148-1652168"/>
<dbReference type="EnsemblBacteria" id="BAA17092">
    <property type="protein sequence ID" value="BAA17092"/>
    <property type="gene ID" value="BAA17092"/>
</dbReference>
<dbReference type="KEGG" id="syn:ssr3451"/>
<dbReference type="eggNOG" id="ENOG5032RR6">
    <property type="taxonomic scope" value="Bacteria"/>
</dbReference>
<dbReference type="InParanoid" id="P09190"/>
<dbReference type="Proteomes" id="UP000001425">
    <property type="component" value="Chromosome"/>
</dbReference>
<dbReference type="GO" id="GO:0009539">
    <property type="term" value="C:photosystem II reaction center"/>
    <property type="evidence" value="ECO:0007669"/>
    <property type="project" value="InterPro"/>
</dbReference>
<dbReference type="GO" id="GO:0031676">
    <property type="term" value="C:plasma membrane-derived thylakoid membrane"/>
    <property type="evidence" value="ECO:0007669"/>
    <property type="project" value="UniProtKB-SubCell"/>
</dbReference>
<dbReference type="GO" id="GO:0030096">
    <property type="term" value="C:plasma membrane-derived thylakoid photosystem II"/>
    <property type="evidence" value="ECO:0000314"/>
    <property type="project" value="UniProtKB"/>
</dbReference>
<dbReference type="GO" id="GO:0009055">
    <property type="term" value="F:electron transfer activity"/>
    <property type="evidence" value="ECO:0007669"/>
    <property type="project" value="UniProtKB-UniRule"/>
</dbReference>
<dbReference type="GO" id="GO:0020037">
    <property type="term" value="F:heme binding"/>
    <property type="evidence" value="ECO:0007669"/>
    <property type="project" value="InterPro"/>
</dbReference>
<dbReference type="GO" id="GO:0005506">
    <property type="term" value="F:iron ion binding"/>
    <property type="evidence" value="ECO:0007669"/>
    <property type="project" value="UniProtKB-UniRule"/>
</dbReference>
<dbReference type="GO" id="GO:0009767">
    <property type="term" value="P:photosynthetic electron transport chain"/>
    <property type="evidence" value="ECO:0007669"/>
    <property type="project" value="InterPro"/>
</dbReference>
<dbReference type="Gene3D" id="1.20.5.860">
    <property type="entry name" value="Photosystem II cytochrome b559, alpha subunit"/>
    <property type="match status" value="1"/>
</dbReference>
<dbReference type="HAMAP" id="MF_00642">
    <property type="entry name" value="PSII_PsbE"/>
    <property type="match status" value="1"/>
</dbReference>
<dbReference type="InterPro" id="IPR006217">
    <property type="entry name" value="PSII_cyt_b559_asu"/>
</dbReference>
<dbReference type="InterPro" id="IPR037025">
    <property type="entry name" value="PSII_cyt_b559_asu_sf"/>
</dbReference>
<dbReference type="InterPro" id="IPR006216">
    <property type="entry name" value="PSII_cyt_b559_CS"/>
</dbReference>
<dbReference type="InterPro" id="IPR013081">
    <property type="entry name" value="PSII_cyt_b559_N"/>
</dbReference>
<dbReference type="InterPro" id="IPR013082">
    <property type="entry name" value="PSII_cytb559_asu_lum"/>
</dbReference>
<dbReference type="NCBIfam" id="TIGR01332">
    <property type="entry name" value="cyt_b559_alpha"/>
    <property type="match status" value="1"/>
</dbReference>
<dbReference type="PANTHER" id="PTHR33391">
    <property type="entry name" value="CYTOCHROME B559 SUBUNIT BETA-RELATED"/>
    <property type="match status" value="1"/>
</dbReference>
<dbReference type="PANTHER" id="PTHR33391:SF9">
    <property type="entry name" value="CYTOCHROME B559 SUBUNIT BETA-RELATED"/>
    <property type="match status" value="1"/>
</dbReference>
<dbReference type="Pfam" id="PF00283">
    <property type="entry name" value="Cytochrom_B559"/>
    <property type="match status" value="1"/>
</dbReference>
<dbReference type="Pfam" id="PF00284">
    <property type="entry name" value="Cytochrom_B559a"/>
    <property type="match status" value="1"/>
</dbReference>
<dbReference type="PIRSF" id="PIRSF000036">
    <property type="entry name" value="PsbE"/>
    <property type="match status" value="1"/>
</dbReference>
<dbReference type="SUPFAM" id="SSF161045">
    <property type="entry name" value="Cytochrome b559 subunits"/>
    <property type="match status" value="1"/>
</dbReference>
<dbReference type="PROSITE" id="PS00537">
    <property type="entry name" value="CYTOCHROME_B559"/>
    <property type="match status" value="1"/>
</dbReference>
<reference key="1">
    <citation type="journal article" date="1988" name="EMBO J.">
        <title>Targeted mutagenesis of the psbE and psbF genes blocks photosynthetic electron transport: evidence for a functional role of cytochrome b559 in photosystem II.</title>
        <authorList>
            <person name="Pakrasi H.B."/>
            <person name="Williams J.G.K."/>
            <person name="Arntzen C.J."/>
        </authorList>
    </citation>
    <scope>NUCLEOTIDE SEQUENCE [GENOMIC DNA]</scope>
</reference>
<reference key="2">
    <citation type="journal article" date="1996" name="DNA Res.">
        <title>Sequence analysis of the genome of the unicellular cyanobacterium Synechocystis sp. strain PCC6803. II. Sequence determination of the entire genome and assignment of potential protein-coding regions.</title>
        <authorList>
            <person name="Kaneko T."/>
            <person name="Sato S."/>
            <person name="Kotani H."/>
            <person name="Tanaka A."/>
            <person name="Asamizu E."/>
            <person name="Nakamura Y."/>
            <person name="Miyajima N."/>
            <person name="Hirosawa M."/>
            <person name="Sugiura M."/>
            <person name="Sasamoto S."/>
            <person name="Kimura T."/>
            <person name="Hosouchi T."/>
            <person name="Matsuno A."/>
            <person name="Muraki A."/>
            <person name="Nakazaki N."/>
            <person name="Naruo K."/>
            <person name="Okumura S."/>
            <person name="Shimpo S."/>
            <person name="Takeuchi C."/>
            <person name="Wada T."/>
            <person name="Watanabe A."/>
            <person name="Yamada M."/>
            <person name="Yasuda M."/>
            <person name="Tabata S."/>
        </authorList>
    </citation>
    <scope>NUCLEOTIDE SEQUENCE [LARGE SCALE GENOMIC DNA]</scope>
    <source>
        <strain>ATCC 27184 / PCC 6803 / Kazusa</strain>
    </source>
</reference>
<reference key="3">
    <citation type="journal article" date="2002" name="Biochemistry">
        <title>Proteomic analysis of a highly active photosystem II preparation from the cyanobacterium Synechocystis sp. PCC 6803 reveals the presence of novel polypeptides.</title>
        <authorList>
            <person name="Kashino Y."/>
            <person name="Lauber W.M."/>
            <person name="Carroll J.A."/>
            <person name="Wang Q."/>
            <person name="Whitmarsh J."/>
            <person name="Satoh K."/>
            <person name="Pakrasi H.B."/>
        </authorList>
    </citation>
    <scope>PROTEIN SEQUENCE OF 2-12</scope>
    <scope>IDENTIFICATION BY MASS SPECTROMETRY</scope>
    <scope>SUBUNIT</scope>
    <scope>SUBCELLULAR LOCATION</scope>
    <source>
        <strain>ATCC 27184 / PCC 6803 / Kazusa</strain>
    </source>
</reference>
<reference key="4">
    <citation type="journal article" date="1995" name="Eur. J. Biochem.">
        <title>Pigment-protein complexes from the photosynthetic membrane of the cyanobacterium Synechocystis sp. PCC 6803.</title>
        <authorList>
            <person name="Barbato R."/>
            <person name="Polverino De Laureto P."/>
            <person name="Rigoni F."/>
            <person name="De Martini E."/>
            <person name="Giacometti G.M."/>
        </authorList>
    </citation>
    <scope>PROTEIN SEQUENCE OF 2-6</scope>
</reference>
<reference key="5">
    <citation type="journal article" date="1991" name="EMBO J.">
        <title>Site directed mutagenesis of the heme axial ligands of cytochrome b559 affects the stability of the photosystem II complex.</title>
        <authorList>
            <person name="Pakrasi H.B."/>
            <person name="de Ciechi P."/>
            <person name="Whitmarsh J."/>
        </authorList>
    </citation>
    <scope>MUTAGENESIS OF HIS-23</scope>
</reference>
<reference evidence="8 9" key="6">
    <citation type="journal article" date="2022" name="Proc. Natl. Acad. Sci. U.S.A.">
        <title>High-resolution cryo-electron microscopy structure of photosystem II from the mesophilic cyanobacterium, Synechocystis sp. PCC 6803.</title>
        <authorList>
            <person name="Gisriel C.J."/>
            <person name="Wang J."/>
            <person name="Liu J."/>
            <person name="Flesher D.A."/>
            <person name="Reiss K.M."/>
            <person name="Huang H.L."/>
            <person name="Yang K.R."/>
            <person name="Armstrong W.H."/>
            <person name="Gunner M.R."/>
            <person name="Batista V.S."/>
            <person name="Debus R.J."/>
            <person name="Brudvig G.W."/>
        </authorList>
    </citation>
    <scope>STRUCTURE BY ELECTRON MICROSCOPY (1.93 ANGSTROMS) OF 3-81</scope>
    <scope>FUNCTION</scope>
    <scope>COFACTOR</scope>
    <scope>SUBUNIT</scope>
    <scope>SUBCELLULAR LOCATION</scope>
    <source>
        <strain>ATCC 27184 / PCC 6803 / Kazusa</strain>
    </source>
</reference>
<keyword id="KW-0002">3D-structure</keyword>
<keyword id="KW-0903">Direct protein sequencing</keyword>
<keyword id="KW-0249">Electron transport</keyword>
<keyword id="KW-0349">Heme</keyword>
<keyword id="KW-0408">Iron</keyword>
<keyword id="KW-0472">Membrane</keyword>
<keyword id="KW-0479">Metal-binding</keyword>
<keyword id="KW-0602">Photosynthesis</keyword>
<keyword id="KW-0604">Photosystem II</keyword>
<keyword id="KW-1185">Reference proteome</keyword>
<keyword id="KW-0793">Thylakoid</keyword>
<keyword id="KW-0812">Transmembrane</keyword>
<keyword id="KW-1133">Transmembrane helix</keyword>
<keyword id="KW-0813">Transport</keyword>
<gene>
    <name evidence="1" type="primary">psbE</name>
    <name type="ordered locus">ssr3451</name>
</gene>
<comment type="function">
    <text evidence="1 4">This b-type cytochrome is tightly associated with the reaction center of photosystem II (PSII). PSII is a light-driven water:plastoquinone oxidoreductase that uses light energy to abstract electrons from H(2)O, generating O(2) and a proton gradient subsequently used for ATP formation. It consists of a core antenna complex that captures photons, and an electron transfer chain that converts photonic excitation into a charge separation.</text>
</comment>
<comment type="cofactor">
    <cofactor evidence="1 4 6">
        <name>heme b</name>
        <dbReference type="ChEBI" id="CHEBI:60344"/>
    </cofactor>
    <text evidence="1 4">With its partner (PsbF) binds heme. PSII binds additional chlorophylls, carotenoids and specific lipids.</text>
</comment>
<comment type="subunit">
    <text evidence="1 2 4">Heterodimer of an alpha subunit and a beta subunit (PubMed:34937700). PSII is composed of 1 copy each of membrane proteins PsbA, PsbB, PsbC, PsbD, PsbE, PsbF, PsbH, PsbI, PsbJ, PsbK, PsbL, PsbM, PsbT, PsbX, PsbY, PsbZ, Psb30/Ycf12, peripheral proteins PsbO, CyanoQ (PsbQ), PsbU, PsbV and a large number of cofactors. It forms dimeric complexes (PubMed:34937700).</text>
</comment>
<comment type="subcellular location">
    <subcellularLocation>
        <location evidence="1 2 4">Cellular thylakoid membrane</location>
        <topology evidence="1 4">Single-pass membrane protein</topology>
    </subcellularLocation>
</comment>
<comment type="similarity">
    <text evidence="1">Belongs to the PsbE/PsbF family.</text>
</comment>
<sequence length="81" mass="9449">MSGTTGERPFSDIVTSIRYWVIHSITIPMLFIAGWLFVSTGLAYDAFGTPRPDEYFTQTRQELPILQERYDINQEIQEFNQ</sequence>
<feature type="initiator methionine" description="Removed" evidence="2 5">
    <location>
        <position position="1"/>
    </location>
</feature>
<feature type="chain" id="PRO_0000200347" description="Cytochrome b559 subunit alpha">
    <location>
        <begin position="2"/>
        <end position="81"/>
    </location>
</feature>
<feature type="transmembrane region" description="Helical" evidence="4 7">
    <location>
        <begin position="19"/>
        <end position="40"/>
    </location>
</feature>
<feature type="binding site" evidence="4 7">
    <location>
        <position position="18"/>
    </location>
    <ligand>
        <name>heme</name>
        <dbReference type="ChEBI" id="CHEBI:30413"/>
        <note>ligand shared with beta subunit</note>
    </ligand>
</feature>
<feature type="binding site" description="axial binding residue" evidence="1 4 6 7">
    <location>
        <position position="23"/>
    </location>
    <ligand>
        <name>heme</name>
        <dbReference type="ChEBI" id="CHEBI:30413"/>
        <note>ligand shared with beta subunit</note>
    </ligand>
    <ligandPart>
        <name>Fe</name>
        <dbReference type="ChEBI" id="CHEBI:18248"/>
    </ligandPart>
</feature>
<feature type="mutagenesis site" description="Complete loss of PSII activity, decreased accumulation of PSII subunits, altered mobility of the PsbE subunit." evidence="3">
    <original>H</original>
    <variation>L</variation>
    <location>
        <position position="23"/>
    </location>
</feature>
<feature type="helix" evidence="10">
    <location>
        <begin position="10"/>
        <end position="14"/>
    </location>
</feature>
<feature type="helix" evidence="10">
    <location>
        <begin position="17"/>
        <end position="39"/>
    </location>
</feature>
<feature type="helix" evidence="10">
    <location>
        <begin position="42"/>
        <end position="47"/>
    </location>
</feature>
<feature type="strand" evidence="10">
    <location>
        <begin position="54"/>
        <end position="56"/>
    </location>
</feature>
<feature type="helix" evidence="10">
    <location>
        <begin position="72"/>
        <end position="79"/>
    </location>
</feature>